<gene>
    <name evidence="2" type="primary">estA</name>
    <name type="ORF">ANIA_07801</name>
</gene>
<evidence type="ECO:0000269" key="1">
    <source>
    </source>
</evidence>
<evidence type="ECO:0000303" key="2">
    <source>
    </source>
</evidence>
<evidence type="ECO:0000305" key="3"/>
<evidence type="ECO:0007744" key="4">
    <source>
        <dbReference type="PDB" id="6GUO"/>
    </source>
</evidence>
<name>ESTA_EMENI</name>
<sequence length="303" mass="33620">MTHWAFSPIQPGAARNMAAWQIAGKKDGPYQIDVSWPLTWSESGDASGKSANAVYLVDGNALFLTATETLRRRESHRPSETGTVVIAIGYPITDSVFSPRRSYDLTPPCDHYIPPEGPDGSPKPEAHGGADEFLTFIAEIVRPFVELKVFPRVSFGRTALFGHSYGGLFALHALFTKPSSFDVYLAASPSIWWNNRSILTEARRFISGAALFSSAHPVLRLSFGSREQYPVRQRVESDEMFKRRQRAAEQRRMNDNCEELYSELLASGRLCKLEVKEYLDEDHGSVIGPALSGGIMFLSNLSA</sequence>
<organism>
    <name type="scientific">Emericella nidulans (strain FGSC A4 / ATCC 38163 / CBS 112.46 / NRRL 194 / M139)</name>
    <name type="common">Aspergillus nidulans</name>
    <dbReference type="NCBI Taxonomy" id="227321"/>
    <lineage>
        <taxon>Eukaryota</taxon>
        <taxon>Fungi</taxon>
        <taxon>Dikarya</taxon>
        <taxon>Ascomycota</taxon>
        <taxon>Pezizomycotina</taxon>
        <taxon>Eurotiomycetes</taxon>
        <taxon>Eurotiomycetidae</taxon>
        <taxon>Eurotiales</taxon>
        <taxon>Aspergillaceae</taxon>
        <taxon>Aspergillus</taxon>
        <taxon>Aspergillus subgen. Nidulantes</taxon>
    </lineage>
</organism>
<reference key="1">
    <citation type="journal article" date="2005" name="Nature">
        <title>Sequencing of Aspergillus nidulans and comparative analysis with A. fumigatus and A. oryzae.</title>
        <authorList>
            <person name="Galagan J.E."/>
            <person name="Calvo S.E."/>
            <person name="Cuomo C."/>
            <person name="Ma L.-J."/>
            <person name="Wortman J.R."/>
            <person name="Batzoglou S."/>
            <person name="Lee S.-I."/>
            <person name="Bastuerkmen M."/>
            <person name="Spevak C.C."/>
            <person name="Clutterbuck J."/>
            <person name="Kapitonov V."/>
            <person name="Jurka J."/>
            <person name="Scazzocchio C."/>
            <person name="Farman M.L."/>
            <person name="Butler J."/>
            <person name="Purcell S."/>
            <person name="Harris S."/>
            <person name="Braus G.H."/>
            <person name="Draht O."/>
            <person name="Busch S."/>
            <person name="D'Enfert C."/>
            <person name="Bouchier C."/>
            <person name="Goldman G.H."/>
            <person name="Bell-Pedersen D."/>
            <person name="Griffiths-Jones S."/>
            <person name="Doonan J.H."/>
            <person name="Yu J."/>
            <person name="Vienken K."/>
            <person name="Pain A."/>
            <person name="Freitag M."/>
            <person name="Selker E.U."/>
            <person name="Archer D.B."/>
            <person name="Penalva M.A."/>
            <person name="Oakley B.R."/>
            <person name="Momany M."/>
            <person name="Tanaka T."/>
            <person name="Kumagai T."/>
            <person name="Asai K."/>
            <person name="Machida M."/>
            <person name="Nierman W.C."/>
            <person name="Denning D.W."/>
            <person name="Caddick M.X."/>
            <person name="Hynes M."/>
            <person name="Paoletti M."/>
            <person name="Fischer R."/>
            <person name="Miller B.L."/>
            <person name="Dyer P.S."/>
            <person name="Sachs M.S."/>
            <person name="Osmani S.A."/>
            <person name="Birren B.W."/>
        </authorList>
    </citation>
    <scope>NUCLEOTIDE SEQUENCE [LARGE SCALE GENOMIC DNA]</scope>
    <source>
        <strain>FGSC A4 / ATCC 38163 / CBS 112.46 / NRRL 194 / M139</strain>
    </source>
</reference>
<reference key="2">
    <citation type="journal article" date="2009" name="Fungal Genet. Biol.">
        <title>The 2008 update of the Aspergillus nidulans genome annotation: a community effort.</title>
        <authorList>
            <person name="Wortman J.R."/>
            <person name="Gilsenan J.M."/>
            <person name="Joardar V."/>
            <person name="Deegan J."/>
            <person name="Clutterbuck J."/>
            <person name="Andersen M.R."/>
            <person name="Archer D."/>
            <person name="Bencina M."/>
            <person name="Braus G."/>
            <person name="Coutinho P."/>
            <person name="von Dohren H."/>
            <person name="Doonan J."/>
            <person name="Driessen A.J."/>
            <person name="Durek P."/>
            <person name="Espeso E."/>
            <person name="Fekete E."/>
            <person name="Flipphi M."/>
            <person name="Estrada C.G."/>
            <person name="Geysens S."/>
            <person name="Goldman G."/>
            <person name="de Groot P.W."/>
            <person name="Hansen K."/>
            <person name="Harris S.D."/>
            <person name="Heinekamp T."/>
            <person name="Helmstaedt K."/>
            <person name="Henrissat B."/>
            <person name="Hofmann G."/>
            <person name="Homan T."/>
            <person name="Horio T."/>
            <person name="Horiuchi H."/>
            <person name="James S."/>
            <person name="Jones M."/>
            <person name="Karaffa L."/>
            <person name="Karanyi Z."/>
            <person name="Kato M."/>
            <person name="Keller N."/>
            <person name="Kelly D.E."/>
            <person name="Kiel J.A."/>
            <person name="Kim J.M."/>
            <person name="van der Klei I.J."/>
            <person name="Klis F.M."/>
            <person name="Kovalchuk A."/>
            <person name="Krasevec N."/>
            <person name="Kubicek C.P."/>
            <person name="Liu B."/>
            <person name="Maccabe A."/>
            <person name="Meyer V."/>
            <person name="Mirabito P."/>
            <person name="Miskei M."/>
            <person name="Mos M."/>
            <person name="Mullins J."/>
            <person name="Nelson D.R."/>
            <person name="Nielsen J."/>
            <person name="Oakley B.R."/>
            <person name="Osmani S.A."/>
            <person name="Pakula T."/>
            <person name="Paszewski A."/>
            <person name="Paulsen I."/>
            <person name="Pilsyk S."/>
            <person name="Pocsi I."/>
            <person name="Punt P.J."/>
            <person name="Ram A.F."/>
            <person name="Ren Q."/>
            <person name="Robellet X."/>
            <person name="Robson G."/>
            <person name="Seiboth B."/>
            <person name="van Solingen P."/>
            <person name="Specht T."/>
            <person name="Sun J."/>
            <person name="Taheri-Talesh N."/>
            <person name="Takeshita N."/>
            <person name="Ussery D."/>
            <person name="vanKuyk P.A."/>
            <person name="Visser H."/>
            <person name="van de Vondervoort P.J."/>
            <person name="de Vries R.P."/>
            <person name="Walton J."/>
            <person name="Xiang X."/>
            <person name="Xiong Y."/>
            <person name="Zeng A.P."/>
            <person name="Brandt B.W."/>
            <person name="Cornell M.J."/>
            <person name="van den Hondel C.A."/>
            <person name="Visser J."/>
            <person name="Oliver S.G."/>
            <person name="Turner G."/>
        </authorList>
    </citation>
    <scope>GENOME REANNOTATION</scope>
    <source>
        <strain>FGSC A4 / ATCC 38163 / CBS 112.46 / NRRL 194 / M139</strain>
    </source>
</reference>
<reference evidence="4" key="3">
    <citation type="journal article" date="2018" name="Angew. Chem. Int. Ed.">
        <title>Iron Scavenging in Aspergillus Species: Structural and Biochemical Insights into Fungal Siderophore Esterases.</title>
        <authorList>
            <person name="Ecker F."/>
            <person name="Haas H."/>
            <person name="Groll M."/>
            <person name="Huber E.M."/>
        </authorList>
    </citation>
    <scope>X-RAY CRYSTALLOGRAPHY (1.75 ANGSTROMS) OF 2-303</scope>
    <scope>SUBUNIT</scope>
    <scope>FUNCTION</scope>
    <scope>CATALYTIC ACTIVITY</scope>
    <scope>BIOPHYSICOCHEMICAL PROPERTIES</scope>
    <scope>DOMAIN</scope>
</reference>
<dbReference type="EC" id="3.1.-.-" evidence="1"/>
<dbReference type="EMBL" id="BN001304">
    <property type="protein sequence ID" value="CBF80134.1"/>
    <property type="molecule type" value="Genomic_DNA"/>
</dbReference>
<dbReference type="RefSeq" id="XP_681070.1">
    <property type="nucleotide sequence ID" value="XM_675978.1"/>
</dbReference>
<dbReference type="PDB" id="6GUO">
    <property type="method" value="X-ray"/>
    <property type="resolution" value="1.75 A"/>
    <property type="chains" value="A/B/C/D=2-303"/>
</dbReference>
<dbReference type="PDBsum" id="6GUO"/>
<dbReference type="SMR" id="Q5AV79"/>
<dbReference type="ESTHER" id="emeni-q5av79">
    <property type="family name" value="A85-IroE-IroD-Fes-Yiel"/>
</dbReference>
<dbReference type="EnsemblFungi" id="CBF80134">
    <property type="protein sequence ID" value="CBF80134"/>
    <property type="gene ID" value="ANIA_07801"/>
</dbReference>
<dbReference type="GeneID" id="2869356"/>
<dbReference type="KEGG" id="ani:ANIA_07801"/>
<dbReference type="VEuPathDB" id="FungiDB:AN7801"/>
<dbReference type="eggNOG" id="ENOG502S92V">
    <property type="taxonomic scope" value="Eukaryota"/>
</dbReference>
<dbReference type="HOGENOM" id="CLU_039834_3_0_1"/>
<dbReference type="InParanoid" id="Q5AV79"/>
<dbReference type="OMA" id="RRMTDNC"/>
<dbReference type="OrthoDB" id="446683at2759"/>
<dbReference type="Proteomes" id="UP000000560">
    <property type="component" value="Chromosome IV"/>
</dbReference>
<dbReference type="GO" id="GO:0016788">
    <property type="term" value="F:hydrolase activity, acting on ester bonds"/>
    <property type="evidence" value="ECO:0000318"/>
    <property type="project" value="GO_Central"/>
</dbReference>
<dbReference type="Gene3D" id="3.40.50.1820">
    <property type="entry name" value="alpha/beta hydrolase"/>
    <property type="match status" value="1"/>
</dbReference>
<dbReference type="InterPro" id="IPR029058">
    <property type="entry name" value="AB_hydrolase_fold"/>
</dbReference>
<dbReference type="InterPro" id="IPR000801">
    <property type="entry name" value="Esterase-like"/>
</dbReference>
<dbReference type="InterPro" id="IPR052558">
    <property type="entry name" value="Siderophore_Hydrolase_D"/>
</dbReference>
<dbReference type="PANTHER" id="PTHR40841">
    <property type="entry name" value="SIDEROPHORE TRIACETYLFUSARININE C ESTERASE"/>
    <property type="match status" value="1"/>
</dbReference>
<dbReference type="PANTHER" id="PTHR40841:SF2">
    <property type="entry name" value="SIDEROPHORE-DEGRADING ESTERASE (EUROFUNG)"/>
    <property type="match status" value="1"/>
</dbReference>
<dbReference type="Pfam" id="PF00756">
    <property type="entry name" value="Esterase"/>
    <property type="match status" value="1"/>
</dbReference>
<dbReference type="SUPFAM" id="SSF53474">
    <property type="entry name" value="alpha/beta-Hydrolases"/>
    <property type="match status" value="1"/>
</dbReference>
<proteinExistence type="evidence at protein level"/>
<comment type="function">
    <text evidence="1">Displays specific enterobactin (ENB) esterase activity required for intracellular release of iron. Enterobactin is a xenosiderophore that is selectively produced by Gram-negative Enterobacteriaceae (PubMed:30070018). The affinity for enterobactin is quite high, potentially due to the low natural abundance of this xenosiderophore in fungal habitats (PubMed:30070018). Does not hydrolyze triacetylfusarinine C (TAFC) (PubMed:30070018).</text>
</comment>
<comment type="catalytic activity">
    <reaction evidence="1">
        <text>enterobactin + 3 H2O = 3 N-(2,3-dihydroxybenzoyl)-L-serine + 2 H(+)</text>
        <dbReference type="Rhea" id="RHEA:28018"/>
        <dbReference type="ChEBI" id="CHEBI:15377"/>
        <dbReference type="ChEBI" id="CHEBI:15378"/>
        <dbReference type="ChEBI" id="CHEBI:58154"/>
        <dbReference type="ChEBI" id="CHEBI:77805"/>
    </reaction>
    <physiologicalReaction direction="left-to-right" evidence="1">
        <dbReference type="Rhea" id="RHEA:28019"/>
    </physiologicalReaction>
</comment>
<comment type="biophysicochemical properties">
    <kinetics>
        <KM evidence="1">11.3 uM for enterobactin</KM>
        <Vmax evidence="1">0.209 umol/sec/mg enzyme towards enterobactin</Vmax>
    </kinetics>
</comment>
<comment type="subunit">
    <text evidence="1">Homodimer.</text>
</comment>
<comment type="domain">
    <text evidence="1">Contains a proline-rich insertion between residues 112 and 122 that forms a kinked, partly disordered turn that decreases the diameter of the active site, making it too narrow for the extended, flat TAFC, while the compact, cylindric enterobactin is still able to enter.</text>
</comment>
<comment type="similarity">
    <text evidence="3">Belongs to the esterase D family.</text>
</comment>
<accession>Q5AV79</accession>
<accession>C8VDS2</accession>
<protein>
    <recommendedName>
        <fullName evidence="2">Siderophore enterobactin esterase</fullName>
        <ecNumber evidence="1">3.1.-.-</ecNumber>
    </recommendedName>
</protein>
<keyword id="KW-0002">3D-structure</keyword>
<keyword id="KW-0378">Hydrolase</keyword>
<keyword id="KW-1185">Reference proteome</keyword>
<feature type="chain" id="PRO_0000462208" description="Siderophore enterobactin esterase">
    <location>
        <begin position="1"/>
        <end position="303"/>
    </location>
</feature>